<dbReference type="EMBL" id="AM263198">
    <property type="protein sequence ID" value="CAK21973.1"/>
    <property type="molecule type" value="Genomic_DNA"/>
</dbReference>
<dbReference type="RefSeq" id="WP_011703279.1">
    <property type="nucleotide sequence ID" value="NC_008555.1"/>
</dbReference>
<dbReference type="SMR" id="A0ALU1"/>
<dbReference type="STRING" id="386043.lwe2555"/>
<dbReference type="GeneID" id="61190479"/>
<dbReference type="KEGG" id="lwe:lwe2555"/>
<dbReference type="eggNOG" id="COG0203">
    <property type="taxonomic scope" value="Bacteria"/>
</dbReference>
<dbReference type="HOGENOM" id="CLU_074407_2_2_9"/>
<dbReference type="OrthoDB" id="9809073at2"/>
<dbReference type="Proteomes" id="UP000000779">
    <property type="component" value="Chromosome"/>
</dbReference>
<dbReference type="GO" id="GO:0022625">
    <property type="term" value="C:cytosolic large ribosomal subunit"/>
    <property type="evidence" value="ECO:0007669"/>
    <property type="project" value="TreeGrafter"/>
</dbReference>
<dbReference type="GO" id="GO:0003735">
    <property type="term" value="F:structural constituent of ribosome"/>
    <property type="evidence" value="ECO:0007669"/>
    <property type="project" value="InterPro"/>
</dbReference>
<dbReference type="GO" id="GO:0006412">
    <property type="term" value="P:translation"/>
    <property type="evidence" value="ECO:0007669"/>
    <property type="project" value="UniProtKB-UniRule"/>
</dbReference>
<dbReference type="FunFam" id="3.90.1030.10:FF:000002">
    <property type="entry name" value="50S ribosomal protein L17"/>
    <property type="match status" value="1"/>
</dbReference>
<dbReference type="Gene3D" id="3.90.1030.10">
    <property type="entry name" value="Ribosomal protein L17"/>
    <property type="match status" value="1"/>
</dbReference>
<dbReference type="HAMAP" id="MF_01368">
    <property type="entry name" value="Ribosomal_bL17"/>
    <property type="match status" value="1"/>
</dbReference>
<dbReference type="InterPro" id="IPR000456">
    <property type="entry name" value="Ribosomal_bL17"/>
</dbReference>
<dbReference type="InterPro" id="IPR047859">
    <property type="entry name" value="Ribosomal_bL17_CS"/>
</dbReference>
<dbReference type="InterPro" id="IPR036373">
    <property type="entry name" value="Ribosomal_bL17_sf"/>
</dbReference>
<dbReference type="NCBIfam" id="TIGR00059">
    <property type="entry name" value="L17"/>
    <property type="match status" value="1"/>
</dbReference>
<dbReference type="PANTHER" id="PTHR14413:SF16">
    <property type="entry name" value="LARGE RIBOSOMAL SUBUNIT PROTEIN BL17M"/>
    <property type="match status" value="1"/>
</dbReference>
<dbReference type="PANTHER" id="PTHR14413">
    <property type="entry name" value="RIBOSOMAL PROTEIN L17"/>
    <property type="match status" value="1"/>
</dbReference>
<dbReference type="Pfam" id="PF01196">
    <property type="entry name" value="Ribosomal_L17"/>
    <property type="match status" value="1"/>
</dbReference>
<dbReference type="SUPFAM" id="SSF64263">
    <property type="entry name" value="Prokaryotic ribosomal protein L17"/>
    <property type="match status" value="1"/>
</dbReference>
<dbReference type="PROSITE" id="PS01167">
    <property type="entry name" value="RIBOSOMAL_L17"/>
    <property type="match status" value="1"/>
</dbReference>
<gene>
    <name evidence="1" type="primary">rplQ</name>
    <name type="ordered locus">lwe2555</name>
</gene>
<keyword id="KW-0687">Ribonucleoprotein</keyword>
<keyword id="KW-0689">Ribosomal protein</keyword>
<proteinExistence type="inferred from homology"/>
<name>RL17_LISW6</name>
<evidence type="ECO:0000255" key="1">
    <source>
        <dbReference type="HAMAP-Rule" id="MF_01368"/>
    </source>
</evidence>
<evidence type="ECO:0000305" key="2"/>
<organism>
    <name type="scientific">Listeria welshimeri serovar 6b (strain ATCC 35897 / DSM 20650 / CCUG 15529 / CIP 8149 / NCTC 11857 / SLCC 5334 / V8)</name>
    <dbReference type="NCBI Taxonomy" id="386043"/>
    <lineage>
        <taxon>Bacteria</taxon>
        <taxon>Bacillati</taxon>
        <taxon>Bacillota</taxon>
        <taxon>Bacilli</taxon>
        <taxon>Bacillales</taxon>
        <taxon>Listeriaceae</taxon>
        <taxon>Listeria</taxon>
    </lineage>
</organism>
<feature type="chain" id="PRO_1000055866" description="Large ribosomal subunit protein bL17">
    <location>
        <begin position="1"/>
        <end position="135"/>
    </location>
</feature>
<sequence length="135" mass="15201">MGYRKLGRTSSQRKALLRDLATDLIVFERIETTEARAKEIRKVVEKLITSGKKGDLHARRQAAAFVRHEVVEVVQVDAKGKDGSTVKKNRPVYALQKLFDDVAPRYAERQGGYTRILKKGPRRGDGAPMVIIELV</sequence>
<comment type="subunit">
    <text evidence="1">Part of the 50S ribosomal subunit. Contacts protein L32.</text>
</comment>
<comment type="similarity">
    <text evidence="1">Belongs to the bacterial ribosomal protein bL17 family.</text>
</comment>
<accession>A0ALU1</accession>
<protein>
    <recommendedName>
        <fullName evidence="1">Large ribosomal subunit protein bL17</fullName>
    </recommendedName>
    <alternativeName>
        <fullName evidence="2">50S ribosomal protein L17</fullName>
    </alternativeName>
</protein>
<reference key="1">
    <citation type="journal article" date="2006" name="J. Bacteriol.">
        <title>Whole-genome sequence of Listeria welshimeri reveals common steps in genome reduction with Listeria innocua as compared to Listeria monocytogenes.</title>
        <authorList>
            <person name="Hain T."/>
            <person name="Steinweg C."/>
            <person name="Kuenne C.T."/>
            <person name="Billion A."/>
            <person name="Ghai R."/>
            <person name="Chatterjee S.S."/>
            <person name="Domann E."/>
            <person name="Kaerst U."/>
            <person name="Goesmann A."/>
            <person name="Bekel T."/>
            <person name="Bartels D."/>
            <person name="Kaiser O."/>
            <person name="Meyer F."/>
            <person name="Puehler A."/>
            <person name="Weisshaar B."/>
            <person name="Wehland J."/>
            <person name="Liang C."/>
            <person name="Dandekar T."/>
            <person name="Lampidis R."/>
            <person name="Kreft J."/>
            <person name="Goebel W."/>
            <person name="Chakraborty T."/>
        </authorList>
    </citation>
    <scope>NUCLEOTIDE SEQUENCE [LARGE SCALE GENOMIC DNA]</scope>
    <source>
        <strain>ATCC 35897 / DSM 20650 / CCUG 15529 / CIP 8149 / NCTC 11857 / SLCC 5334 / V8</strain>
    </source>
</reference>